<name>FPG_BORPE</name>
<keyword id="KW-0227">DNA damage</keyword>
<keyword id="KW-0234">DNA repair</keyword>
<keyword id="KW-0238">DNA-binding</keyword>
<keyword id="KW-0326">Glycosidase</keyword>
<keyword id="KW-0378">Hydrolase</keyword>
<keyword id="KW-0456">Lyase</keyword>
<keyword id="KW-0479">Metal-binding</keyword>
<keyword id="KW-0511">Multifunctional enzyme</keyword>
<keyword id="KW-1185">Reference proteome</keyword>
<keyword id="KW-0862">Zinc</keyword>
<keyword id="KW-0863">Zinc-finger</keyword>
<proteinExistence type="inferred from homology"/>
<reference key="1">
    <citation type="journal article" date="2003" name="Nat. Genet.">
        <title>Comparative analysis of the genome sequences of Bordetella pertussis, Bordetella parapertussis and Bordetella bronchiseptica.</title>
        <authorList>
            <person name="Parkhill J."/>
            <person name="Sebaihia M."/>
            <person name="Preston A."/>
            <person name="Murphy L.D."/>
            <person name="Thomson N.R."/>
            <person name="Harris D.E."/>
            <person name="Holden M.T.G."/>
            <person name="Churcher C.M."/>
            <person name="Bentley S.D."/>
            <person name="Mungall K.L."/>
            <person name="Cerdeno-Tarraga A.-M."/>
            <person name="Temple L."/>
            <person name="James K.D."/>
            <person name="Harris B."/>
            <person name="Quail M.A."/>
            <person name="Achtman M."/>
            <person name="Atkin R."/>
            <person name="Baker S."/>
            <person name="Basham D."/>
            <person name="Bason N."/>
            <person name="Cherevach I."/>
            <person name="Chillingworth T."/>
            <person name="Collins M."/>
            <person name="Cronin A."/>
            <person name="Davis P."/>
            <person name="Doggett J."/>
            <person name="Feltwell T."/>
            <person name="Goble A."/>
            <person name="Hamlin N."/>
            <person name="Hauser H."/>
            <person name="Holroyd S."/>
            <person name="Jagels K."/>
            <person name="Leather S."/>
            <person name="Moule S."/>
            <person name="Norberczak H."/>
            <person name="O'Neil S."/>
            <person name="Ormond D."/>
            <person name="Price C."/>
            <person name="Rabbinowitsch E."/>
            <person name="Rutter S."/>
            <person name="Sanders M."/>
            <person name="Saunders D."/>
            <person name="Seeger K."/>
            <person name="Sharp S."/>
            <person name="Simmonds M."/>
            <person name="Skelton J."/>
            <person name="Squares R."/>
            <person name="Squares S."/>
            <person name="Stevens K."/>
            <person name="Unwin L."/>
            <person name="Whitehead S."/>
            <person name="Barrell B.G."/>
            <person name="Maskell D.J."/>
        </authorList>
    </citation>
    <scope>NUCLEOTIDE SEQUENCE [LARGE SCALE GENOMIC DNA]</scope>
    <source>
        <strain>Tohama I / ATCC BAA-589 / NCTC 13251</strain>
    </source>
</reference>
<comment type="function">
    <text evidence="2">Involved in base excision repair of DNA damaged by oxidation or by mutagenic agents. Acts as a DNA glycosylase that recognizes and removes damaged bases. Has a preference for oxidized purines, such as 7,8-dihydro-8-oxoguanine (8-oxoG). Has AP (apurinic/apyrimidinic) lyase activity and introduces nicks in the DNA strand. Cleaves the DNA backbone by beta-delta elimination to generate a single-strand break at the site of the removed base with both 3'- and 5'-phosphates.</text>
</comment>
<comment type="catalytic activity">
    <reaction evidence="2">
        <text>Hydrolysis of DNA containing ring-opened 7-methylguanine residues, releasing 2,6-diamino-4-hydroxy-5-(N-methyl)formamidopyrimidine.</text>
        <dbReference type="EC" id="3.2.2.23"/>
    </reaction>
</comment>
<comment type="catalytic activity">
    <reaction evidence="2">
        <text>2'-deoxyribonucleotide-(2'-deoxyribose 5'-phosphate)-2'-deoxyribonucleotide-DNA = a 3'-end 2'-deoxyribonucleotide-(2,3-dehydro-2,3-deoxyribose 5'-phosphate)-DNA + a 5'-end 5'-phospho-2'-deoxyribonucleoside-DNA + H(+)</text>
        <dbReference type="Rhea" id="RHEA:66592"/>
        <dbReference type="Rhea" id="RHEA-COMP:13180"/>
        <dbReference type="Rhea" id="RHEA-COMP:16897"/>
        <dbReference type="Rhea" id="RHEA-COMP:17067"/>
        <dbReference type="ChEBI" id="CHEBI:15378"/>
        <dbReference type="ChEBI" id="CHEBI:136412"/>
        <dbReference type="ChEBI" id="CHEBI:157695"/>
        <dbReference type="ChEBI" id="CHEBI:167181"/>
        <dbReference type="EC" id="4.2.99.18"/>
    </reaction>
</comment>
<comment type="cofactor">
    <cofactor evidence="2">
        <name>Zn(2+)</name>
        <dbReference type="ChEBI" id="CHEBI:29105"/>
    </cofactor>
    <text evidence="2">Binds 1 zinc ion per subunit.</text>
</comment>
<comment type="subunit">
    <text evidence="2">Monomer.</text>
</comment>
<comment type="similarity">
    <text evidence="2">Belongs to the FPG family.</text>
</comment>
<organism>
    <name type="scientific">Bordetella pertussis (strain Tohama I / ATCC BAA-589 / NCTC 13251)</name>
    <dbReference type="NCBI Taxonomy" id="257313"/>
    <lineage>
        <taxon>Bacteria</taxon>
        <taxon>Pseudomonadati</taxon>
        <taxon>Pseudomonadota</taxon>
        <taxon>Betaproteobacteria</taxon>
        <taxon>Burkholderiales</taxon>
        <taxon>Alcaligenaceae</taxon>
        <taxon>Bordetella</taxon>
    </lineage>
</organism>
<accession>Q7VUG7</accession>
<protein>
    <recommendedName>
        <fullName evidence="2">Formamidopyrimidine-DNA glycosylase</fullName>
        <shortName evidence="2">Fapy-DNA glycosylase</shortName>
        <ecNumber evidence="2">3.2.2.23</ecNumber>
    </recommendedName>
    <alternativeName>
        <fullName evidence="2">DNA-(apurinic or apyrimidinic site) lyase MutM</fullName>
        <shortName evidence="2">AP lyase MutM</shortName>
        <ecNumber evidence="2">4.2.99.18</ecNumber>
    </alternativeName>
</protein>
<sequence>MPELPEVETTRRGIDTVITGRTLRRLVVREARMRWPIPPALPDLLAGRTVLECGRRGKYLLLRFDHGVQIVHLGMSGSLRRVPEQEAPRKHDHVDWVFDHAVLRLHDPRRFGAVLWHPDEAGPIAAHPLLARLGIEPFDPRFDGRWLHAYFRGRRVAIKQALLAGDAVVGVGNIYASESLFRAGIDPRTAAQRVSAARCDRLAAAIRATLSDALDSGGSTLRDYVGASGEPGAYFAIHAAVYERAGLPCRVCGTPIRRLVQGQRATYFCPSCQKR</sequence>
<feature type="initiator methionine" description="Removed" evidence="1">
    <location>
        <position position="1"/>
    </location>
</feature>
<feature type="chain" id="PRO_0000170813" description="Formamidopyrimidine-DNA glycosylase">
    <location>
        <begin position="2"/>
        <end position="275"/>
    </location>
</feature>
<feature type="zinc finger region" description="FPG-type" evidence="2">
    <location>
        <begin position="240"/>
        <end position="274"/>
    </location>
</feature>
<feature type="active site" description="Schiff-base intermediate with DNA" evidence="2">
    <location>
        <position position="2"/>
    </location>
</feature>
<feature type="active site" description="Proton donor" evidence="2">
    <location>
        <position position="3"/>
    </location>
</feature>
<feature type="active site" description="Proton donor; for beta-elimination activity" evidence="2">
    <location>
        <position position="58"/>
    </location>
</feature>
<feature type="active site" description="Proton donor; for delta-elimination activity" evidence="2">
    <location>
        <position position="264"/>
    </location>
</feature>
<feature type="binding site" evidence="2">
    <location>
        <position position="91"/>
    </location>
    <ligand>
        <name>DNA</name>
        <dbReference type="ChEBI" id="CHEBI:16991"/>
    </ligand>
</feature>
<feature type="binding site" evidence="2">
    <location>
        <position position="109"/>
    </location>
    <ligand>
        <name>DNA</name>
        <dbReference type="ChEBI" id="CHEBI:16991"/>
    </ligand>
</feature>
<feature type="binding site" evidence="2">
    <location>
        <position position="154"/>
    </location>
    <ligand>
        <name>DNA</name>
        <dbReference type="ChEBI" id="CHEBI:16991"/>
    </ligand>
</feature>
<dbReference type="EC" id="3.2.2.23" evidence="2"/>
<dbReference type="EC" id="4.2.99.18" evidence="2"/>
<dbReference type="EMBL" id="BX640420">
    <property type="protein sequence ID" value="CAE43396.1"/>
    <property type="molecule type" value="Genomic_DNA"/>
</dbReference>
<dbReference type="RefSeq" id="NP_881694.1">
    <property type="nucleotide sequence ID" value="NC_002929.2"/>
</dbReference>
<dbReference type="RefSeq" id="WP_010925978.1">
    <property type="nucleotide sequence ID" value="NZ_CP039022.1"/>
</dbReference>
<dbReference type="SMR" id="Q7VUG7"/>
<dbReference type="STRING" id="257313.BP3129"/>
<dbReference type="PaxDb" id="257313-BP3129"/>
<dbReference type="GeneID" id="69603057"/>
<dbReference type="KEGG" id="bpe:BP3129"/>
<dbReference type="PATRIC" id="fig|257313.5.peg.3380"/>
<dbReference type="eggNOG" id="COG0266">
    <property type="taxonomic scope" value="Bacteria"/>
</dbReference>
<dbReference type="HOGENOM" id="CLU_038423_1_1_4"/>
<dbReference type="Proteomes" id="UP000002676">
    <property type="component" value="Chromosome"/>
</dbReference>
<dbReference type="GO" id="GO:0034039">
    <property type="term" value="F:8-oxo-7,8-dihydroguanine DNA N-glycosylase activity"/>
    <property type="evidence" value="ECO:0007669"/>
    <property type="project" value="TreeGrafter"/>
</dbReference>
<dbReference type="GO" id="GO:0140078">
    <property type="term" value="F:class I DNA-(apurinic or apyrimidinic site) endonuclease activity"/>
    <property type="evidence" value="ECO:0007669"/>
    <property type="project" value="UniProtKB-EC"/>
</dbReference>
<dbReference type="GO" id="GO:0003684">
    <property type="term" value="F:damaged DNA binding"/>
    <property type="evidence" value="ECO:0007669"/>
    <property type="project" value="InterPro"/>
</dbReference>
<dbReference type="GO" id="GO:0008270">
    <property type="term" value="F:zinc ion binding"/>
    <property type="evidence" value="ECO:0007669"/>
    <property type="project" value="UniProtKB-UniRule"/>
</dbReference>
<dbReference type="GO" id="GO:0006284">
    <property type="term" value="P:base-excision repair"/>
    <property type="evidence" value="ECO:0007669"/>
    <property type="project" value="InterPro"/>
</dbReference>
<dbReference type="CDD" id="cd08966">
    <property type="entry name" value="EcFpg-like_N"/>
    <property type="match status" value="1"/>
</dbReference>
<dbReference type="FunFam" id="1.10.8.50:FF:000003">
    <property type="entry name" value="Formamidopyrimidine-DNA glycosylase"/>
    <property type="match status" value="1"/>
</dbReference>
<dbReference type="FunFam" id="3.20.190.10:FF:000001">
    <property type="entry name" value="Formamidopyrimidine-DNA glycosylase"/>
    <property type="match status" value="1"/>
</dbReference>
<dbReference type="Gene3D" id="1.10.8.50">
    <property type="match status" value="1"/>
</dbReference>
<dbReference type="Gene3D" id="3.20.190.10">
    <property type="entry name" value="MutM-like, N-terminal"/>
    <property type="match status" value="1"/>
</dbReference>
<dbReference type="HAMAP" id="MF_00103">
    <property type="entry name" value="Fapy_DNA_glycosyl"/>
    <property type="match status" value="1"/>
</dbReference>
<dbReference type="InterPro" id="IPR015886">
    <property type="entry name" value="DNA_glyclase/AP_lyase_DNA-bd"/>
</dbReference>
<dbReference type="InterPro" id="IPR015887">
    <property type="entry name" value="DNA_glyclase_Znf_dom_DNA_BS"/>
</dbReference>
<dbReference type="InterPro" id="IPR020629">
    <property type="entry name" value="Formamido-pyr_DNA_Glyclase"/>
</dbReference>
<dbReference type="InterPro" id="IPR012319">
    <property type="entry name" value="FPG_cat"/>
</dbReference>
<dbReference type="InterPro" id="IPR035937">
    <property type="entry name" value="MutM-like_N-ter"/>
</dbReference>
<dbReference type="InterPro" id="IPR010979">
    <property type="entry name" value="Ribosomal_uS13-like_H2TH"/>
</dbReference>
<dbReference type="InterPro" id="IPR000214">
    <property type="entry name" value="Znf_DNA_glyclase/AP_lyase"/>
</dbReference>
<dbReference type="InterPro" id="IPR010663">
    <property type="entry name" value="Znf_FPG/IleRS"/>
</dbReference>
<dbReference type="NCBIfam" id="TIGR00577">
    <property type="entry name" value="fpg"/>
    <property type="match status" value="1"/>
</dbReference>
<dbReference type="NCBIfam" id="NF002211">
    <property type="entry name" value="PRK01103.1"/>
    <property type="match status" value="1"/>
</dbReference>
<dbReference type="PANTHER" id="PTHR22993">
    <property type="entry name" value="FORMAMIDOPYRIMIDINE-DNA GLYCOSYLASE"/>
    <property type="match status" value="1"/>
</dbReference>
<dbReference type="PANTHER" id="PTHR22993:SF9">
    <property type="entry name" value="FORMAMIDOPYRIMIDINE-DNA GLYCOSYLASE"/>
    <property type="match status" value="1"/>
</dbReference>
<dbReference type="Pfam" id="PF01149">
    <property type="entry name" value="Fapy_DNA_glyco"/>
    <property type="match status" value="1"/>
</dbReference>
<dbReference type="Pfam" id="PF06831">
    <property type="entry name" value="H2TH"/>
    <property type="match status" value="1"/>
</dbReference>
<dbReference type="Pfam" id="PF06827">
    <property type="entry name" value="zf-FPG_IleRS"/>
    <property type="match status" value="1"/>
</dbReference>
<dbReference type="SMART" id="SM00898">
    <property type="entry name" value="Fapy_DNA_glyco"/>
    <property type="match status" value="1"/>
</dbReference>
<dbReference type="SMART" id="SM01232">
    <property type="entry name" value="H2TH"/>
    <property type="match status" value="1"/>
</dbReference>
<dbReference type="SUPFAM" id="SSF57716">
    <property type="entry name" value="Glucocorticoid receptor-like (DNA-binding domain)"/>
    <property type="match status" value="1"/>
</dbReference>
<dbReference type="SUPFAM" id="SSF81624">
    <property type="entry name" value="N-terminal domain of MutM-like DNA repair proteins"/>
    <property type="match status" value="1"/>
</dbReference>
<dbReference type="SUPFAM" id="SSF46946">
    <property type="entry name" value="S13-like H2TH domain"/>
    <property type="match status" value="1"/>
</dbReference>
<dbReference type="PROSITE" id="PS51068">
    <property type="entry name" value="FPG_CAT"/>
    <property type="match status" value="1"/>
</dbReference>
<dbReference type="PROSITE" id="PS01242">
    <property type="entry name" value="ZF_FPG_1"/>
    <property type="match status" value="1"/>
</dbReference>
<dbReference type="PROSITE" id="PS51066">
    <property type="entry name" value="ZF_FPG_2"/>
    <property type="match status" value="1"/>
</dbReference>
<gene>
    <name evidence="2" type="primary">mutM</name>
    <name evidence="2" type="synonym">fpg</name>
    <name type="ordered locus">BP3129</name>
</gene>
<evidence type="ECO:0000250" key="1"/>
<evidence type="ECO:0000255" key="2">
    <source>
        <dbReference type="HAMAP-Rule" id="MF_00103"/>
    </source>
</evidence>